<protein>
    <recommendedName>
        <fullName evidence="2">Probable translation initiation factor IF-2</fullName>
    </recommendedName>
</protein>
<sequence>MLNLSAEQRPRLRQPIVAVLGHVDHGKTTLLDKIRGTVVALKEPGQITQHIGASLVPTDVIEKVTEPLKKIIPTVKLELPGLLFIDTPGHEIFSNLRRRGGAVADLAILVVDLNEGFQPQTYEAVEILKQRRVPFVVAANKIDRIPGWRSYPDQPFLISYRKQSEEVRERLDNKIYEIMGELAKLGFDSERFDRITNFTRQIAIVPISAKTGEGIPELLAVLAGLAQRYMKGRLKYVEGPAKGVIMEVKEEPGYGSTIDTIIYDGIIRQGDTIVVGGIEGPIVTKVRALLVPAPLTEMRATKRFEPVEEVSAAAGVKIVAPGLEKAVAGAPVYVVDSPEKLEELKEQVKREVEEVMIETDKEGVIVKADTLGTLEALVQFLKNRGIPVRMARVGPVTKRDIVEAMTVKSKNKEYGVILAFNVKVLPEAKELAEKEGIKIFQHNVIYRLIEEFEEWLKALREEEKRKVLETLVRPGKIRILPGFVFRRSDPAIVGVEVLGGVIKPKYPLMKEDGSRVGSILQIQDKGQSVPEARAGQQVAISIKGRVMVGRHIHEGDVLYTDVPAEHAKLWLTKFKNELSDDEKFVLQEIIKIKRKQNPLYGVVLPSPSS</sequence>
<keyword id="KW-0342">GTP-binding</keyword>
<keyword id="KW-0396">Initiation factor</keyword>
<keyword id="KW-0547">Nucleotide-binding</keyword>
<keyword id="KW-0648">Protein biosynthesis</keyword>
<keyword id="KW-1185">Reference proteome</keyword>
<comment type="function">
    <text evidence="2">Function in general translation initiation by promoting the binding of the formylmethionine-tRNA to ribosomes. Seems to function along with eIF-2.</text>
</comment>
<comment type="similarity">
    <text evidence="2">Belongs to the TRAFAC class translation factor GTPase superfamily. Classic translation factor GTPase family. IF-2 subfamily.</text>
</comment>
<accession>A8A8D3</accession>
<feature type="chain" id="PRO_0000335524" description="Probable translation initiation factor IF-2">
    <location>
        <begin position="1"/>
        <end position="609"/>
    </location>
</feature>
<feature type="domain" description="tr-type G">
    <location>
        <begin position="12"/>
        <end position="230"/>
    </location>
</feature>
<feature type="region of interest" description="G1" evidence="1">
    <location>
        <begin position="21"/>
        <end position="28"/>
    </location>
</feature>
<feature type="region of interest" description="G2" evidence="1">
    <location>
        <begin position="46"/>
        <end position="50"/>
    </location>
</feature>
<feature type="region of interest" description="G3" evidence="1">
    <location>
        <begin position="86"/>
        <end position="89"/>
    </location>
</feature>
<feature type="region of interest" description="G4" evidence="1">
    <location>
        <begin position="140"/>
        <end position="143"/>
    </location>
</feature>
<feature type="region of interest" description="G5" evidence="1">
    <location>
        <begin position="208"/>
        <end position="210"/>
    </location>
</feature>
<feature type="binding site" evidence="2">
    <location>
        <begin position="21"/>
        <end position="28"/>
    </location>
    <ligand>
        <name>GTP</name>
        <dbReference type="ChEBI" id="CHEBI:37565"/>
    </ligand>
</feature>
<feature type="binding site" evidence="2">
    <location>
        <begin position="86"/>
        <end position="90"/>
    </location>
    <ligand>
        <name>GTP</name>
        <dbReference type="ChEBI" id="CHEBI:37565"/>
    </ligand>
</feature>
<feature type="binding site" evidence="2">
    <location>
        <begin position="140"/>
        <end position="143"/>
    </location>
    <ligand>
        <name>GTP</name>
        <dbReference type="ChEBI" id="CHEBI:37565"/>
    </ligand>
</feature>
<proteinExistence type="inferred from homology"/>
<reference key="1">
    <citation type="journal article" date="2008" name="Genome Biol.">
        <title>A genomic analysis of the archaeal system Ignicoccus hospitalis-Nanoarchaeum equitans.</title>
        <authorList>
            <person name="Podar M."/>
            <person name="Anderson I."/>
            <person name="Makarova K.S."/>
            <person name="Elkins J.G."/>
            <person name="Ivanova N."/>
            <person name="Wall M.A."/>
            <person name="Lykidis A."/>
            <person name="Mavromatis K."/>
            <person name="Sun H."/>
            <person name="Hudson M.E."/>
            <person name="Chen W."/>
            <person name="Deciu C."/>
            <person name="Hutchison D."/>
            <person name="Eads J.R."/>
            <person name="Anderson A."/>
            <person name="Fernandes F."/>
            <person name="Szeto E."/>
            <person name="Lapidus A."/>
            <person name="Kyrpides N.C."/>
            <person name="Saier M.H. Jr."/>
            <person name="Richardson P.M."/>
            <person name="Rachel R."/>
            <person name="Huber H."/>
            <person name="Eisen J.A."/>
            <person name="Koonin E.V."/>
            <person name="Keller M."/>
            <person name="Stetter K.O."/>
        </authorList>
    </citation>
    <scope>NUCLEOTIDE SEQUENCE [LARGE SCALE GENOMIC DNA]</scope>
    <source>
        <strain>KIN4/I / DSM 18386 / JCM 14125</strain>
    </source>
</reference>
<name>IF2P_IGNH4</name>
<organism>
    <name type="scientific">Ignicoccus hospitalis (strain KIN4/I / DSM 18386 / JCM 14125)</name>
    <dbReference type="NCBI Taxonomy" id="453591"/>
    <lineage>
        <taxon>Archaea</taxon>
        <taxon>Thermoproteota</taxon>
        <taxon>Thermoprotei</taxon>
        <taxon>Desulfurococcales</taxon>
        <taxon>Desulfurococcaceae</taxon>
        <taxon>Ignicoccus</taxon>
    </lineage>
</organism>
<dbReference type="EMBL" id="CP000816">
    <property type="protein sequence ID" value="ABU81185.1"/>
    <property type="molecule type" value="Genomic_DNA"/>
</dbReference>
<dbReference type="RefSeq" id="WP_011998037.1">
    <property type="nucleotide sequence ID" value="NC_009776.1"/>
</dbReference>
<dbReference type="SMR" id="A8A8D3"/>
<dbReference type="STRING" id="453591.Igni_0001"/>
<dbReference type="GeneID" id="5562612"/>
<dbReference type="KEGG" id="iho:Igni_0001"/>
<dbReference type="eggNOG" id="arCOG01560">
    <property type="taxonomic scope" value="Archaea"/>
</dbReference>
<dbReference type="HOGENOM" id="CLU_002656_3_3_2"/>
<dbReference type="OrthoDB" id="30957at2157"/>
<dbReference type="PhylomeDB" id="A8A8D3"/>
<dbReference type="Proteomes" id="UP000000262">
    <property type="component" value="Chromosome"/>
</dbReference>
<dbReference type="GO" id="GO:0005737">
    <property type="term" value="C:cytoplasm"/>
    <property type="evidence" value="ECO:0007669"/>
    <property type="project" value="TreeGrafter"/>
</dbReference>
<dbReference type="GO" id="GO:0005525">
    <property type="term" value="F:GTP binding"/>
    <property type="evidence" value="ECO:0007669"/>
    <property type="project" value="UniProtKB-KW"/>
</dbReference>
<dbReference type="GO" id="GO:0003924">
    <property type="term" value="F:GTPase activity"/>
    <property type="evidence" value="ECO:0007669"/>
    <property type="project" value="UniProtKB-UniRule"/>
</dbReference>
<dbReference type="GO" id="GO:0003743">
    <property type="term" value="F:translation initiation factor activity"/>
    <property type="evidence" value="ECO:0007669"/>
    <property type="project" value="UniProtKB-UniRule"/>
</dbReference>
<dbReference type="CDD" id="cd03703">
    <property type="entry name" value="aeIF5B_II"/>
    <property type="match status" value="1"/>
</dbReference>
<dbReference type="CDD" id="cd16266">
    <property type="entry name" value="IF2_aeIF5B_IV"/>
    <property type="match status" value="1"/>
</dbReference>
<dbReference type="CDD" id="cd01887">
    <property type="entry name" value="IF2_eIF5B"/>
    <property type="match status" value="1"/>
</dbReference>
<dbReference type="FunFam" id="3.40.50.300:FF:000112">
    <property type="entry name" value="Eukaryotic translation initiation factor 5B"/>
    <property type="match status" value="1"/>
</dbReference>
<dbReference type="FunFam" id="2.40.30.10:FF:000013">
    <property type="entry name" value="eukaryotic translation initiation factor 5B"/>
    <property type="match status" value="1"/>
</dbReference>
<dbReference type="FunFam" id="2.40.30.10:FF:000152">
    <property type="entry name" value="Probable translation initiation factor IF-2"/>
    <property type="match status" value="1"/>
</dbReference>
<dbReference type="FunFam" id="3.40.50.10050:FF:000009">
    <property type="entry name" value="Probable translation initiation factor IF-2"/>
    <property type="match status" value="1"/>
</dbReference>
<dbReference type="Gene3D" id="3.40.50.300">
    <property type="entry name" value="P-loop containing nucleotide triphosphate hydrolases"/>
    <property type="match status" value="1"/>
</dbReference>
<dbReference type="Gene3D" id="2.40.30.10">
    <property type="entry name" value="Translation factors"/>
    <property type="match status" value="2"/>
</dbReference>
<dbReference type="Gene3D" id="3.40.50.10050">
    <property type="entry name" value="Translation initiation factor IF- 2, domain 3"/>
    <property type="match status" value="1"/>
</dbReference>
<dbReference type="HAMAP" id="MF_00100_A">
    <property type="entry name" value="IF_2_A"/>
    <property type="match status" value="1"/>
</dbReference>
<dbReference type="InterPro" id="IPR029459">
    <property type="entry name" value="EFTU-type"/>
</dbReference>
<dbReference type="InterPro" id="IPR027417">
    <property type="entry name" value="P-loop_NTPase"/>
</dbReference>
<dbReference type="InterPro" id="IPR005225">
    <property type="entry name" value="Small_GTP-bd"/>
</dbReference>
<dbReference type="InterPro" id="IPR000795">
    <property type="entry name" value="T_Tr_GTP-bd_dom"/>
</dbReference>
<dbReference type="InterPro" id="IPR004544">
    <property type="entry name" value="TF_aIF-2_arc"/>
</dbReference>
<dbReference type="InterPro" id="IPR015760">
    <property type="entry name" value="TIF_IF2"/>
</dbReference>
<dbReference type="InterPro" id="IPR023115">
    <property type="entry name" value="TIF_IF2_dom3"/>
</dbReference>
<dbReference type="InterPro" id="IPR036925">
    <property type="entry name" value="TIF_IF2_dom3_sf"/>
</dbReference>
<dbReference type="InterPro" id="IPR009000">
    <property type="entry name" value="Transl_B-barrel_sf"/>
</dbReference>
<dbReference type="NCBIfam" id="TIGR00491">
    <property type="entry name" value="aIF-2"/>
    <property type="match status" value="1"/>
</dbReference>
<dbReference type="NCBIfam" id="NF003078">
    <property type="entry name" value="PRK04004.1"/>
    <property type="match status" value="1"/>
</dbReference>
<dbReference type="NCBIfam" id="NF011418">
    <property type="entry name" value="PRK14845.1"/>
    <property type="match status" value="1"/>
</dbReference>
<dbReference type="NCBIfam" id="TIGR00231">
    <property type="entry name" value="small_GTP"/>
    <property type="match status" value="1"/>
</dbReference>
<dbReference type="PANTHER" id="PTHR43381:SF4">
    <property type="entry name" value="EUKARYOTIC TRANSLATION INITIATION FACTOR 5B"/>
    <property type="match status" value="1"/>
</dbReference>
<dbReference type="PANTHER" id="PTHR43381">
    <property type="entry name" value="TRANSLATION INITIATION FACTOR IF-2-RELATED"/>
    <property type="match status" value="1"/>
</dbReference>
<dbReference type="Pfam" id="PF00009">
    <property type="entry name" value="GTP_EFTU"/>
    <property type="match status" value="1"/>
</dbReference>
<dbReference type="Pfam" id="PF14578">
    <property type="entry name" value="GTP_EFTU_D4"/>
    <property type="match status" value="1"/>
</dbReference>
<dbReference type="Pfam" id="PF11987">
    <property type="entry name" value="IF-2"/>
    <property type="match status" value="1"/>
</dbReference>
<dbReference type="PRINTS" id="PR00315">
    <property type="entry name" value="ELONGATNFCT"/>
</dbReference>
<dbReference type="SUPFAM" id="SSF52156">
    <property type="entry name" value="Initiation factor IF2/eIF5b, domain 3"/>
    <property type="match status" value="1"/>
</dbReference>
<dbReference type="SUPFAM" id="SSF52540">
    <property type="entry name" value="P-loop containing nucleoside triphosphate hydrolases"/>
    <property type="match status" value="1"/>
</dbReference>
<dbReference type="SUPFAM" id="SSF50447">
    <property type="entry name" value="Translation proteins"/>
    <property type="match status" value="1"/>
</dbReference>
<dbReference type="PROSITE" id="PS51722">
    <property type="entry name" value="G_TR_2"/>
    <property type="match status" value="1"/>
</dbReference>
<evidence type="ECO:0000250" key="1"/>
<evidence type="ECO:0000255" key="2">
    <source>
        <dbReference type="HAMAP-Rule" id="MF_00100"/>
    </source>
</evidence>
<gene>
    <name evidence="2" type="primary">infB</name>
    <name type="ordered locus">Igni_0001</name>
</gene>